<accession>P54918</accession>
<evidence type="ECO:0000255" key="1">
    <source>
        <dbReference type="HAMAP-Rule" id="MF_01201"/>
    </source>
</evidence>
<evidence type="ECO:0000305" key="2"/>
<name>ALR_SYNY3</name>
<organism>
    <name type="scientific">Synechocystis sp. (strain ATCC 27184 / PCC 6803 / Kazusa)</name>
    <dbReference type="NCBI Taxonomy" id="1111708"/>
    <lineage>
        <taxon>Bacteria</taxon>
        <taxon>Bacillati</taxon>
        <taxon>Cyanobacteriota</taxon>
        <taxon>Cyanophyceae</taxon>
        <taxon>Synechococcales</taxon>
        <taxon>Merismopediaceae</taxon>
        <taxon>Synechocystis</taxon>
    </lineage>
</organism>
<gene>
    <name type="primary">alr</name>
    <name type="ordered locus">slr0827</name>
</gene>
<keyword id="KW-0413">Isomerase</keyword>
<keyword id="KW-0663">Pyridoxal phosphate</keyword>
<keyword id="KW-1185">Reference proteome</keyword>
<comment type="function">
    <text evidence="1">Catalyzes the interconversion of L-alanine and D-alanine. May also act on other amino acids.</text>
</comment>
<comment type="catalytic activity">
    <reaction evidence="1">
        <text>L-alanine = D-alanine</text>
        <dbReference type="Rhea" id="RHEA:20249"/>
        <dbReference type="ChEBI" id="CHEBI:57416"/>
        <dbReference type="ChEBI" id="CHEBI:57972"/>
        <dbReference type="EC" id="5.1.1.1"/>
    </reaction>
</comment>
<comment type="cofactor">
    <cofactor evidence="1">
        <name>pyridoxal 5'-phosphate</name>
        <dbReference type="ChEBI" id="CHEBI:597326"/>
    </cofactor>
</comment>
<comment type="pathway">
    <text evidence="1">Amino-acid biosynthesis; D-alanine biosynthesis; D-alanine from L-alanine: step 1/1.</text>
</comment>
<comment type="similarity">
    <text evidence="1">Belongs to the alanine racemase family.</text>
</comment>
<comment type="sequence caution" evidence="2">
    <conflict type="erroneous initiation">
        <sequence resource="EMBL-CDS" id="BAA10510"/>
    </conflict>
</comment>
<proteinExistence type="inferred from homology"/>
<dbReference type="EC" id="5.1.1.1" evidence="1"/>
<dbReference type="EMBL" id="BA000022">
    <property type="protein sequence ID" value="BAA10510.1"/>
    <property type="status" value="ALT_INIT"/>
    <property type="molecule type" value="Genomic_DNA"/>
</dbReference>
<dbReference type="PIR" id="S75775">
    <property type="entry name" value="S75775"/>
</dbReference>
<dbReference type="SMR" id="P54918"/>
<dbReference type="FunCoup" id="P54918">
    <property type="interactions" value="306"/>
</dbReference>
<dbReference type="STRING" id="1148.gene:10500014"/>
<dbReference type="PaxDb" id="1148-1001266"/>
<dbReference type="EnsemblBacteria" id="BAA10510">
    <property type="protein sequence ID" value="BAA10510"/>
    <property type="gene ID" value="BAA10510"/>
</dbReference>
<dbReference type="KEGG" id="syn:slr0827"/>
<dbReference type="eggNOG" id="COG0787">
    <property type="taxonomic scope" value="Bacteria"/>
</dbReference>
<dbReference type="InParanoid" id="P54918"/>
<dbReference type="PhylomeDB" id="P54918"/>
<dbReference type="UniPathway" id="UPA00042">
    <property type="reaction ID" value="UER00497"/>
</dbReference>
<dbReference type="Proteomes" id="UP000001425">
    <property type="component" value="Chromosome"/>
</dbReference>
<dbReference type="GO" id="GO:0005829">
    <property type="term" value="C:cytosol"/>
    <property type="evidence" value="ECO:0000318"/>
    <property type="project" value="GO_Central"/>
</dbReference>
<dbReference type="GO" id="GO:0008784">
    <property type="term" value="F:alanine racemase activity"/>
    <property type="evidence" value="ECO:0000318"/>
    <property type="project" value="GO_Central"/>
</dbReference>
<dbReference type="GO" id="GO:0030170">
    <property type="term" value="F:pyridoxal phosphate binding"/>
    <property type="evidence" value="ECO:0000318"/>
    <property type="project" value="GO_Central"/>
</dbReference>
<dbReference type="GO" id="GO:0030632">
    <property type="term" value="P:D-alanine biosynthetic process"/>
    <property type="evidence" value="ECO:0000318"/>
    <property type="project" value="GO_Central"/>
</dbReference>
<dbReference type="CDD" id="cd00430">
    <property type="entry name" value="PLPDE_III_AR"/>
    <property type="match status" value="1"/>
</dbReference>
<dbReference type="FunFam" id="3.20.20.10:FF:000002">
    <property type="entry name" value="Alanine racemase"/>
    <property type="match status" value="1"/>
</dbReference>
<dbReference type="Gene3D" id="3.20.20.10">
    <property type="entry name" value="Alanine racemase"/>
    <property type="match status" value="1"/>
</dbReference>
<dbReference type="Gene3D" id="2.40.37.10">
    <property type="entry name" value="Lyase, Ornithine Decarboxylase, Chain A, domain 1"/>
    <property type="match status" value="1"/>
</dbReference>
<dbReference type="HAMAP" id="MF_01201">
    <property type="entry name" value="Ala_racemase"/>
    <property type="match status" value="1"/>
</dbReference>
<dbReference type="InterPro" id="IPR000821">
    <property type="entry name" value="Ala_racemase"/>
</dbReference>
<dbReference type="InterPro" id="IPR009006">
    <property type="entry name" value="Ala_racemase/Decarboxylase_C"/>
</dbReference>
<dbReference type="InterPro" id="IPR011079">
    <property type="entry name" value="Ala_racemase_C"/>
</dbReference>
<dbReference type="InterPro" id="IPR001608">
    <property type="entry name" value="Ala_racemase_N"/>
</dbReference>
<dbReference type="InterPro" id="IPR020622">
    <property type="entry name" value="Ala_racemase_pyridoxalP-BS"/>
</dbReference>
<dbReference type="InterPro" id="IPR029066">
    <property type="entry name" value="PLP-binding_barrel"/>
</dbReference>
<dbReference type="NCBIfam" id="TIGR00492">
    <property type="entry name" value="alr"/>
    <property type="match status" value="1"/>
</dbReference>
<dbReference type="PANTHER" id="PTHR30511">
    <property type="entry name" value="ALANINE RACEMASE"/>
    <property type="match status" value="1"/>
</dbReference>
<dbReference type="PANTHER" id="PTHR30511:SF0">
    <property type="entry name" value="ALANINE RACEMASE, CATABOLIC-RELATED"/>
    <property type="match status" value="1"/>
</dbReference>
<dbReference type="Pfam" id="PF00842">
    <property type="entry name" value="Ala_racemase_C"/>
    <property type="match status" value="1"/>
</dbReference>
<dbReference type="Pfam" id="PF01168">
    <property type="entry name" value="Ala_racemase_N"/>
    <property type="match status" value="1"/>
</dbReference>
<dbReference type="PRINTS" id="PR00992">
    <property type="entry name" value="ALARACEMASE"/>
</dbReference>
<dbReference type="SMART" id="SM01005">
    <property type="entry name" value="Ala_racemase_C"/>
    <property type="match status" value="1"/>
</dbReference>
<dbReference type="SUPFAM" id="SSF50621">
    <property type="entry name" value="Alanine racemase C-terminal domain-like"/>
    <property type="match status" value="1"/>
</dbReference>
<dbReference type="SUPFAM" id="SSF51419">
    <property type="entry name" value="PLP-binding barrel"/>
    <property type="match status" value="1"/>
</dbReference>
<dbReference type="PROSITE" id="PS00395">
    <property type="entry name" value="ALANINE_RACEMASE"/>
    <property type="match status" value="1"/>
</dbReference>
<reference key="1">
    <citation type="journal article" date="1995" name="DNA Res.">
        <title>Sequence analysis of the genome of the unicellular cyanobacterium Synechocystis sp. strain PCC6803. I. Sequence features in the 1 Mb region from map positions 64% to 92% of the genome.</title>
        <authorList>
            <person name="Kaneko T."/>
            <person name="Tanaka A."/>
            <person name="Sato S."/>
            <person name="Kotani H."/>
            <person name="Sazuka T."/>
            <person name="Miyajima N."/>
            <person name="Sugiura M."/>
            <person name="Tabata S."/>
        </authorList>
    </citation>
    <scope>NUCLEOTIDE SEQUENCE [LARGE SCALE GENOMIC DNA]</scope>
    <source>
        <strain>ATCC 27184 / PCC 6803 / N-1</strain>
    </source>
</reference>
<reference key="2">
    <citation type="journal article" date="1996" name="DNA Res.">
        <title>Sequence analysis of the genome of the unicellular cyanobacterium Synechocystis sp. strain PCC6803. II. Sequence determination of the entire genome and assignment of potential protein-coding regions.</title>
        <authorList>
            <person name="Kaneko T."/>
            <person name="Sato S."/>
            <person name="Kotani H."/>
            <person name="Tanaka A."/>
            <person name="Asamizu E."/>
            <person name="Nakamura Y."/>
            <person name="Miyajima N."/>
            <person name="Hirosawa M."/>
            <person name="Sugiura M."/>
            <person name="Sasamoto S."/>
            <person name="Kimura T."/>
            <person name="Hosouchi T."/>
            <person name="Matsuno A."/>
            <person name="Muraki A."/>
            <person name="Nakazaki N."/>
            <person name="Naruo K."/>
            <person name="Okumura S."/>
            <person name="Shimpo S."/>
            <person name="Takeuchi C."/>
            <person name="Wada T."/>
            <person name="Watanabe A."/>
            <person name="Yamada M."/>
            <person name="Yasuda M."/>
            <person name="Tabata S."/>
        </authorList>
    </citation>
    <scope>NUCLEOTIDE SEQUENCE [LARGE SCALE GENOMIC DNA]</scope>
    <source>
        <strain>ATCC 27184 / PCC 6803 / Kazusa</strain>
    </source>
</reference>
<protein>
    <recommendedName>
        <fullName evidence="1">Alanine racemase</fullName>
        <ecNumber evidence="1">5.1.1.1</ecNumber>
    </recommendedName>
</protein>
<feature type="chain" id="PRO_0000114587" description="Alanine racemase">
    <location>
        <begin position="1"/>
        <end position="372"/>
    </location>
</feature>
<feature type="active site" description="Proton acceptor; specific for D-alanine" evidence="1">
    <location>
        <position position="37"/>
    </location>
</feature>
<feature type="active site" description="Proton acceptor; specific for L-alanine" evidence="1">
    <location>
        <position position="265"/>
    </location>
</feature>
<feature type="binding site" evidence="1">
    <location>
        <position position="136"/>
    </location>
    <ligand>
        <name>substrate</name>
    </ligand>
</feature>
<feature type="binding site" evidence="1">
    <location>
        <position position="313"/>
    </location>
    <ligand>
        <name>substrate</name>
    </ligand>
</feature>
<feature type="modified residue" description="N6-(pyridoxal phosphate)lysine" evidence="1">
    <location>
        <position position="37"/>
    </location>
</feature>
<sequence length="372" mass="40673">MIRQRAWVEIDQAALVHNVRQFRQYVGPKTNLMAVVKADAYGHGAVRVAQTALQAGADWLAIATLGEGIELREAGITAPILLLGGINSPEEIEAIAHWRLQPTLCSPEQAQLFNDILLKLGKVLPVHLKLDTGMTRLGTPWPQAANFVGLVQSLPQLRLASLYSHLATADDPNTATMLQQQERFAKAIASLRQARLPIPKLHLANSAATLHGQAWHYDMVRVGLGLYGLYPAPHLGDCLDLKPVLTVRAKITQIRTIPPGTGVSYGHQFVSEETMPMAVVGIGYADGVPRNLSNQLEVLLRGQPVRQIGAITMDQMMVDLRGIDDPQVGEVVTLIGQDGDRQITADHWASTLGTISWEILCGFKHRLPRILI</sequence>